<organism>
    <name type="scientific">Yarrowia lipolytica (strain CLIB 122 / E 150)</name>
    <name type="common">Yeast</name>
    <name type="synonym">Candida lipolytica</name>
    <dbReference type="NCBI Taxonomy" id="284591"/>
    <lineage>
        <taxon>Eukaryota</taxon>
        <taxon>Fungi</taxon>
        <taxon>Dikarya</taxon>
        <taxon>Ascomycota</taxon>
        <taxon>Saccharomycotina</taxon>
        <taxon>Dipodascomycetes</taxon>
        <taxon>Dipodascales</taxon>
        <taxon>Dipodascales incertae sedis</taxon>
        <taxon>Yarrowia</taxon>
    </lineage>
</organism>
<dbReference type="EC" id="2.1.1.314"/>
<dbReference type="EMBL" id="CR382132">
    <property type="protein sequence ID" value="CAG78331.1"/>
    <property type="molecule type" value="Genomic_DNA"/>
</dbReference>
<dbReference type="RefSeq" id="XP_505522.1">
    <property type="nucleotide sequence ID" value="XM_505522.1"/>
</dbReference>
<dbReference type="SMR" id="Q6C1E0"/>
<dbReference type="FunCoup" id="Q6C1E0">
    <property type="interactions" value="986"/>
</dbReference>
<dbReference type="STRING" id="284591.Q6C1E0"/>
<dbReference type="EnsemblFungi" id="CAG78331">
    <property type="protein sequence ID" value="CAG78331"/>
    <property type="gene ID" value="YALI0_F17138g"/>
</dbReference>
<dbReference type="KEGG" id="yli:2907831"/>
<dbReference type="VEuPathDB" id="FungiDB:YALI0_F17138g"/>
<dbReference type="HOGENOM" id="CLU_066040_1_0_1"/>
<dbReference type="InParanoid" id="Q6C1E0"/>
<dbReference type="OMA" id="HNASIMS"/>
<dbReference type="OrthoDB" id="81824at4891"/>
<dbReference type="UniPathway" id="UPA00559"/>
<dbReference type="Proteomes" id="UP000001300">
    <property type="component" value="Chromosome F"/>
</dbReference>
<dbReference type="GO" id="GO:0005737">
    <property type="term" value="C:cytoplasm"/>
    <property type="evidence" value="ECO:0007669"/>
    <property type="project" value="UniProtKB-SubCell"/>
</dbReference>
<dbReference type="GO" id="GO:0141133">
    <property type="term" value="F:diphthine methyl ester synthase activity"/>
    <property type="evidence" value="ECO:0007669"/>
    <property type="project" value="UniProtKB-EC"/>
</dbReference>
<dbReference type="GO" id="GO:0032259">
    <property type="term" value="P:methylation"/>
    <property type="evidence" value="ECO:0007669"/>
    <property type="project" value="UniProtKB-KW"/>
</dbReference>
<dbReference type="GO" id="GO:0017183">
    <property type="term" value="P:protein histidyl modification to diphthamide"/>
    <property type="evidence" value="ECO:0000250"/>
    <property type="project" value="UniProtKB"/>
</dbReference>
<dbReference type="CDD" id="cd11647">
    <property type="entry name" value="DHP5_DphB"/>
    <property type="match status" value="1"/>
</dbReference>
<dbReference type="FunFam" id="3.30.950.10:FF:000004">
    <property type="entry name" value="Diphthine synthase putative"/>
    <property type="match status" value="1"/>
</dbReference>
<dbReference type="FunFam" id="3.40.1010.10:FF:000004">
    <property type="entry name" value="Putative diphthine synthase"/>
    <property type="match status" value="1"/>
</dbReference>
<dbReference type="Gene3D" id="3.40.1010.10">
    <property type="entry name" value="Cobalt-precorrin-4 Transmethylase, Domain 1"/>
    <property type="match status" value="1"/>
</dbReference>
<dbReference type="Gene3D" id="3.30.950.10">
    <property type="entry name" value="Methyltransferase, Cobalt-precorrin-4 Transmethylase, Domain 2"/>
    <property type="match status" value="1"/>
</dbReference>
<dbReference type="HAMAP" id="MF_01084">
    <property type="entry name" value="Diphthine_synth"/>
    <property type="match status" value="1"/>
</dbReference>
<dbReference type="InterPro" id="IPR000878">
    <property type="entry name" value="4pyrrol_Mease"/>
</dbReference>
<dbReference type="InterPro" id="IPR035996">
    <property type="entry name" value="4pyrrol_Methylase_sf"/>
</dbReference>
<dbReference type="InterPro" id="IPR014777">
    <property type="entry name" value="4pyrrole_Mease_sub1"/>
</dbReference>
<dbReference type="InterPro" id="IPR014776">
    <property type="entry name" value="4pyrrole_Mease_sub2"/>
</dbReference>
<dbReference type="InterPro" id="IPR004551">
    <property type="entry name" value="Dphthn_synthase"/>
</dbReference>
<dbReference type="NCBIfam" id="TIGR00522">
    <property type="entry name" value="dph5"/>
    <property type="match status" value="1"/>
</dbReference>
<dbReference type="PANTHER" id="PTHR10882:SF0">
    <property type="entry name" value="DIPHTHINE METHYL ESTER SYNTHASE"/>
    <property type="match status" value="1"/>
</dbReference>
<dbReference type="PANTHER" id="PTHR10882">
    <property type="entry name" value="DIPHTHINE SYNTHASE"/>
    <property type="match status" value="1"/>
</dbReference>
<dbReference type="Pfam" id="PF00590">
    <property type="entry name" value="TP_methylase"/>
    <property type="match status" value="1"/>
</dbReference>
<dbReference type="PIRSF" id="PIRSF036432">
    <property type="entry name" value="Diphthine_synth"/>
    <property type="match status" value="1"/>
</dbReference>
<dbReference type="SUPFAM" id="SSF53790">
    <property type="entry name" value="Tetrapyrrole methylase"/>
    <property type="match status" value="1"/>
</dbReference>
<accession>Q6C1E0</accession>
<sequence length="300" mass="33656">MLHLIGLGLSHETDITVRGLETIKKCKRVYLEAYTSILMAAEKETLEKFYGKELILADREMVEQASDDILAGAQEDDIAFLVVGDPFGATTHTDLVIRARELGIKYQTIHNASVMNAVGACGLQLYNFGQTVSLVFFTDSWKPDSFYDKIHENRKIGLHTLVLLDIKVKEQSIENIMRGRNVFEPPRYMSIEQAASQLLEIEESRDEKVYCSDTPAIAVSRLGSPRQCIKAGSLGELAEYESGEPLHSLIVLGNNVHDLEIDFLVEFADDPEAFKALITKDAENFKKEVKIMSYSDDDDE</sequence>
<proteinExistence type="inferred from homology"/>
<gene>
    <name type="primary">DPH5</name>
    <name type="ordered locus">YALI0F17138g</name>
</gene>
<evidence type="ECO:0000250" key="1"/>
<evidence type="ECO:0000250" key="2">
    <source>
        <dbReference type="UniProtKB" id="P32469"/>
    </source>
</evidence>
<evidence type="ECO:0000305" key="3"/>
<reference key="1">
    <citation type="journal article" date="2004" name="Nature">
        <title>Genome evolution in yeasts.</title>
        <authorList>
            <person name="Dujon B."/>
            <person name="Sherman D."/>
            <person name="Fischer G."/>
            <person name="Durrens P."/>
            <person name="Casaregola S."/>
            <person name="Lafontaine I."/>
            <person name="de Montigny J."/>
            <person name="Marck C."/>
            <person name="Neuveglise C."/>
            <person name="Talla E."/>
            <person name="Goffard N."/>
            <person name="Frangeul L."/>
            <person name="Aigle M."/>
            <person name="Anthouard V."/>
            <person name="Babour A."/>
            <person name="Barbe V."/>
            <person name="Barnay S."/>
            <person name="Blanchin S."/>
            <person name="Beckerich J.-M."/>
            <person name="Beyne E."/>
            <person name="Bleykasten C."/>
            <person name="Boisrame A."/>
            <person name="Boyer J."/>
            <person name="Cattolico L."/>
            <person name="Confanioleri F."/>
            <person name="de Daruvar A."/>
            <person name="Despons L."/>
            <person name="Fabre E."/>
            <person name="Fairhead C."/>
            <person name="Ferry-Dumazet H."/>
            <person name="Groppi A."/>
            <person name="Hantraye F."/>
            <person name="Hennequin C."/>
            <person name="Jauniaux N."/>
            <person name="Joyet P."/>
            <person name="Kachouri R."/>
            <person name="Kerrest A."/>
            <person name="Koszul R."/>
            <person name="Lemaire M."/>
            <person name="Lesur I."/>
            <person name="Ma L."/>
            <person name="Muller H."/>
            <person name="Nicaud J.-M."/>
            <person name="Nikolski M."/>
            <person name="Oztas S."/>
            <person name="Ozier-Kalogeropoulos O."/>
            <person name="Pellenz S."/>
            <person name="Potier S."/>
            <person name="Richard G.-F."/>
            <person name="Straub M.-L."/>
            <person name="Suleau A."/>
            <person name="Swennen D."/>
            <person name="Tekaia F."/>
            <person name="Wesolowski-Louvel M."/>
            <person name="Westhof E."/>
            <person name="Wirth B."/>
            <person name="Zeniou-Meyer M."/>
            <person name="Zivanovic Y."/>
            <person name="Bolotin-Fukuhara M."/>
            <person name="Thierry A."/>
            <person name="Bouchier C."/>
            <person name="Caudron B."/>
            <person name="Scarpelli C."/>
            <person name="Gaillardin C."/>
            <person name="Weissenbach J."/>
            <person name="Wincker P."/>
            <person name="Souciet J.-L."/>
        </authorList>
    </citation>
    <scope>NUCLEOTIDE SEQUENCE [LARGE SCALE GENOMIC DNA]</scope>
    <source>
        <strain>CLIB 122 / E 150</strain>
    </source>
</reference>
<protein>
    <recommendedName>
        <fullName>Diphthine methyl ester synthase</fullName>
        <ecNumber>2.1.1.314</ecNumber>
    </recommendedName>
    <alternativeName>
        <fullName>Diphthamide biosynthesis methyltransferase</fullName>
    </alternativeName>
</protein>
<keyword id="KW-0963">Cytoplasm</keyword>
<keyword id="KW-0489">Methyltransferase</keyword>
<keyword id="KW-1185">Reference proteome</keyword>
<keyword id="KW-0949">S-adenosyl-L-methionine</keyword>
<keyword id="KW-0808">Transferase</keyword>
<feature type="chain" id="PRO_0000156146" description="Diphthine methyl ester synthase">
    <location>
        <begin position="1"/>
        <end position="300"/>
    </location>
</feature>
<feature type="binding site" evidence="1">
    <location>
        <position position="9"/>
    </location>
    <ligand>
        <name>S-adenosyl-L-methionine</name>
        <dbReference type="ChEBI" id="CHEBI:59789"/>
    </ligand>
</feature>
<feature type="binding site" evidence="1">
    <location>
        <position position="85"/>
    </location>
    <ligand>
        <name>S-adenosyl-L-methionine</name>
        <dbReference type="ChEBI" id="CHEBI:59789"/>
    </ligand>
</feature>
<feature type="binding site" evidence="1">
    <location>
        <position position="88"/>
    </location>
    <ligand>
        <name>S-adenosyl-L-methionine</name>
        <dbReference type="ChEBI" id="CHEBI:59789"/>
    </ligand>
</feature>
<feature type="binding site" evidence="1">
    <location>
        <begin position="113"/>
        <end position="114"/>
    </location>
    <ligand>
        <name>S-adenosyl-L-methionine</name>
        <dbReference type="ChEBI" id="CHEBI:59789"/>
    </ligand>
</feature>
<feature type="binding site" evidence="1">
    <location>
        <position position="164"/>
    </location>
    <ligand>
        <name>S-adenosyl-L-methionine</name>
        <dbReference type="ChEBI" id="CHEBI:59789"/>
    </ligand>
</feature>
<feature type="binding site" evidence="1">
    <location>
        <position position="222"/>
    </location>
    <ligand>
        <name>S-adenosyl-L-methionine</name>
        <dbReference type="ChEBI" id="CHEBI:59789"/>
    </ligand>
</feature>
<feature type="binding site" evidence="1">
    <location>
        <position position="247"/>
    </location>
    <ligand>
        <name>S-adenosyl-L-methionine</name>
        <dbReference type="ChEBI" id="CHEBI:59789"/>
    </ligand>
</feature>
<name>DPH5_YARLI</name>
<comment type="function">
    <text evidence="2">S-adenosyl-L-methionine-dependent methyltransferase that catalyzes four methylations of the modified target histidine residue in translation elongation factor 2 (EF-2), to form an intermediate called diphthine methyl ester. The four successive methylation reactions represent the second step of diphthamide biosynthesis.</text>
</comment>
<comment type="catalytic activity">
    <reaction evidence="2">
        <text>2-[(3S)-amino-3-carboxypropyl]-L-histidyl-[translation elongation factor 2] + 4 S-adenosyl-L-methionine = diphthine methyl ester-[translation elongation factor 2] + 4 S-adenosyl-L-homocysteine + 3 H(+)</text>
        <dbReference type="Rhea" id="RHEA:42652"/>
        <dbReference type="Rhea" id="RHEA-COMP:9749"/>
        <dbReference type="Rhea" id="RHEA-COMP:10173"/>
        <dbReference type="ChEBI" id="CHEBI:15378"/>
        <dbReference type="ChEBI" id="CHEBI:57856"/>
        <dbReference type="ChEBI" id="CHEBI:59789"/>
        <dbReference type="ChEBI" id="CHEBI:73995"/>
        <dbReference type="ChEBI" id="CHEBI:79005"/>
        <dbReference type="EC" id="2.1.1.314"/>
    </reaction>
</comment>
<comment type="pathway">
    <text>Protein modification; peptidyl-diphthamide biosynthesis.</text>
</comment>
<comment type="subcellular location">
    <subcellularLocation>
        <location evidence="1">Cytoplasm</location>
    </subcellularLocation>
</comment>
<comment type="similarity">
    <text evidence="3">Belongs to the diphthine synthase family.</text>
</comment>